<reference key="1">
    <citation type="journal article" date="2004" name="Proc. Natl. Acad. Sci. U.S.A.">
        <title>Complete genomes of two clinical Staphylococcus aureus strains: evidence for the rapid evolution of virulence and drug resistance.</title>
        <authorList>
            <person name="Holden M.T.G."/>
            <person name="Feil E.J."/>
            <person name="Lindsay J.A."/>
            <person name="Peacock S.J."/>
            <person name="Day N.P.J."/>
            <person name="Enright M.C."/>
            <person name="Foster T.J."/>
            <person name="Moore C.E."/>
            <person name="Hurst L."/>
            <person name="Atkin R."/>
            <person name="Barron A."/>
            <person name="Bason N."/>
            <person name="Bentley S.D."/>
            <person name="Chillingworth C."/>
            <person name="Chillingworth T."/>
            <person name="Churcher C."/>
            <person name="Clark L."/>
            <person name="Corton C."/>
            <person name="Cronin A."/>
            <person name="Doggett J."/>
            <person name="Dowd L."/>
            <person name="Feltwell T."/>
            <person name="Hance Z."/>
            <person name="Harris B."/>
            <person name="Hauser H."/>
            <person name="Holroyd S."/>
            <person name="Jagels K."/>
            <person name="James K.D."/>
            <person name="Lennard N."/>
            <person name="Line A."/>
            <person name="Mayes R."/>
            <person name="Moule S."/>
            <person name="Mungall K."/>
            <person name="Ormond D."/>
            <person name="Quail M.A."/>
            <person name="Rabbinowitsch E."/>
            <person name="Rutherford K.M."/>
            <person name="Sanders M."/>
            <person name="Sharp S."/>
            <person name="Simmonds M."/>
            <person name="Stevens K."/>
            <person name="Whitehead S."/>
            <person name="Barrell B.G."/>
            <person name="Spratt B.G."/>
            <person name="Parkhill J."/>
        </authorList>
    </citation>
    <scope>NUCLEOTIDE SEQUENCE [LARGE SCALE GENOMIC DNA]</scope>
    <source>
        <strain>MSSA476</strain>
    </source>
</reference>
<evidence type="ECO:0000255" key="1">
    <source>
        <dbReference type="HAMAP-Rule" id="MF_01114"/>
    </source>
</evidence>
<organism>
    <name type="scientific">Staphylococcus aureus (strain MSSA476)</name>
    <dbReference type="NCBI Taxonomy" id="282459"/>
    <lineage>
        <taxon>Bacteria</taxon>
        <taxon>Bacillati</taxon>
        <taxon>Bacillota</taxon>
        <taxon>Bacilli</taxon>
        <taxon>Bacillales</taxon>
        <taxon>Staphylococcaceae</taxon>
        <taxon>Staphylococcus</taxon>
    </lineage>
</organism>
<keyword id="KW-0963">Cytoplasm</keyword>
<feature type="chain" id="PRO_0000162473" description="Regulatory protein RecX">
    <location>
        <begin position="1"/>
        <end position="272"/>
    </location>
</feature>
<protein>
    <recommendedName>
        <fullName evidence="1">Regulatory protein RecX</fullName>
    </recommendedName>
</protein>
<accession>Q6G861</accession>
<dbReference type="EMBL" id="BX571857">
    <property type="protein sequence ID" value="CAG43600.1"/>
    <property type="molecule type" value="Genomic_DNA"/>
</dbReference>
<dbReference type="RefSeq" id="WP_001124419.1">
    <property type="nucleotide sequence ID" value="NC_002953.3"/>
</dbReference>
<dbReference type="SMR" id="Q6G861"/>
<dbReference type="KEGG" id="sas:SAS1795"/>
<dbReference type="HOGENOM" id="CLU_066607_4_0_9"/>
<dbReference type="GO" id="GO:0005737">
    <property type="term" value="C:cytoplasm"/>
    <property type="evidence" value="ECO:0007669"/>
    <property type="project" value="UniProtKB-SubCell"/>
</dbReference>
<dbReference type="GO" id="GO:0006282">
    <property type="term" value="P:regulation of DNA repair"/>
    <property type="evidence" value="ECO:0007669"/>
    <property type="project" value="UniProtKB-UniRule"/>
</dbReference>
<dbReference type="Gene3D" id="1.10.10.10">
    <property type="entry name" value="Winged helix-like DNA-binding domain superfamily/Winged helix DNA-binding domain"/>
    <property type="match status" value="4"/>
</dbReference>
<dbReference type="HAMAP" id="MF_01114">
    <property type="entry name" value="RecX"/>
    <property type="match status" value="1"/>
</dbReference>
<dbReference type="InterPro" id="IPR053926">
    <property type="entry name" value="RecX_HTH_1st"/>
</dbReference>
<dbReference type="InterPro" id="IPR053925">
    <property type="entry name" value="RecX_HTH_3rd"/>
</dbReference>
<dbReference type="InterPro" id="IPR003783">
    <property type="entry name" value="Regulatory_RecX"/>
</dbReference>
<dbReference type="InterPro" id="IPR036388">
    <property type="entry name" value="WH-like_DNA-bd_sf"/>
</dbReference>
<dbReference type="NCBIfam" id="NF010733">
    <property type="entry name" value="PRK14135.1"/>
    <property type="match status" value="1"/>
</dbReference>
<dbReference type="PANTHER" id="PTHR33602">
    <property type="entry name" value="REGULATORY PROTEIN RECX FAMILY PROTEIN"/>
    <property type="match status" value="1"/>
</dbReference>
<dbReference type="PANTHER" id="PTHR33602:SF1">
    <property type="entry name" value="REGULATORY PROTEIN RECX FAMILY PROTEIN"/>
    <property type="match status" value="1"/>
</dbReference>
<dbReference type="Pfam" id="PF21982">
    <property type="entry name" value="RecX_HTH1"/>
    <property type="match status" value="1"/>
</dbReference>
<dbReference type="Pfam" id="PF21981">
    <property type="entry name" value="RecX_HTH3"/>
    <property type="match status" value="1"/>
</dbReference>
<proteinExistence type="inferred from homology"/>
<gene>
    <name evidence="1" type="primary">recX</name>
    <name type="ordered locus">SAS1795</name>
</gene>
<name>RECX_STAAS</name>
<sequence length="272" mass="32241">MPKITKIEVQKKNKERFNLFLDEQFEMGIDIDTLVKFNLKKGQQLEAADMAEIQKYDHYRIGLNKAIQYLSYKKRTEKEVIQYLQKEEISEQAISEVIEYCYREKLIDHQDYAESLKNTMIRTTDKGPKIYQQKLYQLGIEPNIIEIFTELYREQQELDDIIQIAEKISKTKKGPQNKVKEKVMQSLIQKGFEMETIHAVLNEMDFTQDEAVLDDLLQRDLEKIYNKNRKKYTQQKLISKTIEGLMRKGYKYDKIKAKLEESGIADGTEEIE</sequence>
<comment type="function">
    <text evidence="1">Modulates RecA activity.</text>
</comment>
<comment type="subcellular location">
    <subcellularLocation>
        <location evidence="1">Cytoplasm</location>
    </subcellularLocation>
</comment>
<comment type="similarity">
    <text evidence="1">Belongs to the RecX family.</text>
</comment>